<dbReference type="EC" id="2.3.1.12"/>
<dbReference type="EMBL" id="X58434">
    <property type="protein sequence ID" value="CAA41339.1"/>
    <property type="molecule type" value="Genomic_DNA"/>
</dbReference>
<dbReference type="PIR" id="S19722">
    <property type="entry name" value="S19722"/>
</dbReference>
<dbReference type="RefSeq" id="WP_115210351.1">
    <property type="nucleotide sequence ID" value="NZ_JAHWLG010000001.1"/>
</dbReference>
<dbReference type="SMR" id="Q59821"/>
<dbReference type="GO" id="GO:0005737">
    <property type="term" value="C:cytoplasm"/>
    <property type="evidence" value="ECO:0007669"/>
    <property type="project" value="TreeGrafter"/>
</dbReference>
<dbReference type="GO" id="GO:0004742">
    <property type="term" value="F:dihydrolipoyllysine-residue acetyltransferase activity"/>
    <property type="evidence" value="ECO:0007669"/>
    <property type="project" value="UniProtKB-EC"/>
</dbReference>
<dbReference type="GO" id="GO:0031405">
    <property type="term" value="F:lipoic acid binding"/>
    <property type="evidence" value="ECO:0007669"/>
    <property type="project" value="TreeGrafter"/>
</dbReference>
<dbReference type="CDD" id="cd06849">
    <property type="entry name" value="lipoyl_domain"/>
    <property type="match status" value="1"/>
</dbReference>
<dbReference type="FunFam" id="3.30.559.10:FF:000007">
    <property type="entry name" value="Dihydrolipoamide acetyltransferase component of pyruvate dehydrogenase complex"/>
    <property type="match status" value="1"/>
</dbReference>
<dbReference type="FunFam" id="4.10.320.10:FF:000011">
    <property type="entry name" value="Dihydrolipoamide acetyltransferase component of pyruvate dehydrogenase complex"/>
    <property type="match status" value="1"/>
</dbReference>
<dbReference type="Gene3D" id="2.40.50.100">
    <property type="match status" value="1"/>
</dbReference>
<dbReference type="Gene3D" id="3.30.559.10">
    <property type="entry name" value="Chloramphenicol acetyltransferase-like domain"/>
    <property type="match status" value="1"/>
</dbReference>
<dbReference type="Gene3D" id="4.10.320.10">
    <property type="entry name" value="E3-binding domain"/>
    <property type="match status" value="1"/>
</dbReference>
<dbReference type="InterPro" id="IPR003016">
    <property type="entry name" value="2-oxoA_DH_lipoyl-BS"/>
</dbReference>
<dbReference type="InterPro" id="IPR001078">
    <property type="entry name" value="2-oxoacid_DH_actylTfrase"/>
</dbReference>
<dbReference type="InterPro" id="IPR050743">
    <property type="entry name" value="2-oxoacid_DH_E2_comp"/>
</dbReference>
<dbReference type="InterPro" id="IPR000089">
    <property type="entry name" value="Biotin_lipoyl"/>
</dbReference>
<dbReference type="InterPro" id="IPR023213">
    <property type="entry name" value="CAT-like_dom_sf"/>
</dbReference>
<dbReference type="InterPro" id="IPR036625">
    <property type="entry name" value="E3-bd_dom_sf"/>
</dbReference>
<dbReference type="InterPro" id="IPR004167">
    <property type="entry name" value="PSBD"/>
</dbReference>
<dbReference type="InterPro" id="IPR011053">
    <property type="entry name" value="Single_hybrid_motif"/>
</dbReference>
<dbReference type="PANTHER" id="PTHR43178">
    <property type="entry name" value="DIHYDROLIPOAMIDE ACETYLTRANSFERASE COMPONENT OF PYRUVATE DEHYDROGENASE COMPLEX"/>
    <property type="match status" value="1"/>
</dbReference>
<dbReference type="PANTHER" id="PTHR43178:SF5">
    <property type="entry name" value="LIPOAMIDE ACYLTRANSFERASE COMPONENT OF BRANCHED-CHAIN ALPHA-KETO ACID DEHYDROGENASE COMPLEX, MITOCHONDRIAL"/>
    <property type="match status" value="1"/>
</dbReference>
<dbReference type="Pfam" id="PF00198">
    <property type="entry name" value="2-oxoacid_dh"/>
    <property type="match status" value="1"/>
</dbReference>
<dbReference type="Pfam" id="PF00364">
    <property type="entry name" value="Biotin_lipoyl"/>
    <property type="match status" value="1"/>
</dbReference>
<dbReference type="Pfam" id="PF02817">
    <property type="entry name" value="E3_binding"/>
    <property type="match status" value="1"/>
</dbReference>
<dbReference type="SUPFAM" id="SSF52777">
    <property type="entry name" value="CoA-dependent acyltransferases"/>
    <property type="match status" value="1"/>
</dbReference>
<dbReference type="SUPFAM" id="SSF47005">
    <property type="entry name" value="Peripheral subunit-binding domain of 2-oxo acid dehydrogenase complex"/>
    <property type="match status" value="1"/>
</dbReference>
<dbReference type="SUPFAM" id="SSF51230">
    <property type="entry name" value="Single hybrid motif"/>
    <property type="match status" value="1"/>
</dbReference>
<dbReference type="PROSITE" id="PS50968">
    <property type="entry name" value="BIOTINYL_LIPOYL"/>
    <property type="match status" value="1"/>
</dbReference>
<dbReference type="PROSITE" id="PS00189">
    <property type="entry name" value="LIPOYL"/>
    <property type="match status" value="1"/>
</dbReference>
<dbReference type="PROSITE" id="PS51826">
    <property type="entry name" value="PSBD"/>
    <property type="match status" value="1"/>
</dbReference>
<accession>Q59821</accession>
<keyword id="KW-0012">Acyltransferase</keyword>
<keyword id="KW-0450">Lipoyl</keyword>
<keyword id="KW-0808">Transferase</keyword>
<name>ODP2_STAAU</name>
<sequence>MAFEFRLPDIGEGIHEGEIVKWFVKAGDTIEEDDVLAEVQNDKSVVEIPSPVSGTVEEVMVEEGTVAVVGDVIVKIDAPDAEDMQFKGHDDDSSSKEEPAKEEAPAEQAPVATQTEEVDENRTVKAMPSVRKYAREKGVNIKAVSGSGKNGRITKEDVDAYLNGGAPTASNESADSATNEEVAETPAAPAAVSLEGDFPETTEKIPAMRRAIAKAMVNSKHTAPHVTLMDEIDVQALWDHRKKFKEIAAEQGTKLTFLPYVVKALVSALKKYPALNTSFNEEAGEIVHKHYWNIGIAADTDRGLLVPVVKHADRKSIFQISDEINELAVKARDGKLTADEMKGATCTISNIGSAGGQWFTPVINHPEVAILGIGRIAQKPIVKDGEIVAAPVLALSLSFDHRQIDGATGQNAMNHIKRLLNNPELLLMEG</sequence>
<evidence type="ECO:0000250" key="1"/>
<evidence type="ECO:0000255" key="2"/>
<evidence type="ECO:0000255" key="3">
    <source>
        <dbReference type="PROSITE-ProRule" id="PRU01066"/>
    </source>
</evidence>
<evidence type="ECO:0000255" key="4">
    <source>
        <dbReference type="PROSITE-ProRule" id="PRU01170"/>
    </source>
</evidence>
<evidence type="ECO:0000256" key="5">
    <source>
        <dbReference type="SAM" id="MobiDB-lite"/>
    </source>
</evidence>
<evidence type="ECO:0000305" key="6"/>
<proteinExistence type="inferred from homology"/>
<gene>
    <name type="primary">pdhC</name>
</gene>
<organism>
    <name type="scientific">Staphylococcus aureus</name>
    <dbReference type="NCBI Taxonomy" id="1280"/>
    <lineage>
        <taxon>Bacteria</taxon>
        <taxon>Bacillati</taxon>
        <taxon>Bacillota</taxon>
        <taxon>Bacilli</taxon>
        <taxon>Bacillales</taxon>
        <taxon>Staphylococcaceae</taxon>
        <taxon>Staphylococcus</taxon>
    </lineage>
</organism>
<protein>
    <recommendedName>
        <fullName>Dihydrolipoyllysine-residue acetyltransferase component of pyruvate dehydrogenase complex</fullName>
        <ecNumber>2.3.1.12</ecNumber>
    </recommendedName>
    <alternativeName>
        <fullName>Dihydrolipoamide acetyltransferase component of pyruvate dehydrogenase complex</fullName>
    </alternativeName>
    <alternativeName>
        <fullName>E2</fullName>
    </alternativeName>
</protein>
<feature type="chain" id="PRO_0000162292" description="Dihydrolipoyllysine-residue acetyltransferase component of pyruvate dehydrogenase complex">
    <location>
        <begin position="1"/>
        <end position="430"/>
    </location>
</feature>
<feature type="domain" description="Lipoyl-binding" evidence="3">
    <location>
        <begin position="2"/>
        <end position="77"/>
    </location>
</feature>
<feature type="domain" description="Peripheral subunit-binding (PSBD)" evidence="4">
    <location>
        <begin position="125"/>
        <end position="162"/>
    </location>
</feature>
<feature type="region of interest" description="Disordered" evidence="5">
    <location>
        <begin position="80"/>
        <end position="122"/>
    </location>
</feature>
<feature type="region of interest" description="Disordered" evidence="5">
    <location>
        <begin position="164"/>
        <end position="200"/>
    </location>
</feature>
<feature type="compositionally biased region" description="Basic and acidic residues" evidence="5">
    <location>
        <begin position="84"/>
        <end position="104"/>
    </location>
</feature>
<feature type="compositionally biased region" description="Low complexity" evidence="5">
    <location>
        <begin position="177"/>
        <end position="192"/>
    </location>
</feature>
<feature type="active site" evidence="2">
    <location>
        <position position="401"/>
    </location>
</feature>
<feature type="modified residue" description="N6-lipoyllysine" evidence="1 3">
    <location>
        <position position="43"/>
    </location>
</feature>
<comment type="function">
    <text>The pyruvate dehydrogenase complex catalyzes the overall conversion of pyruvate to acetyl-CoA and CO(2). It contains multiple copies of three enzymatic components: pyruvate dehydrogenase (E1), dihydrolipoamide acetyltransferase (E2) and lipoamide dehydrogenase (E3).</text>
</comment>
<comment type="catalytic activity">
    <reaction>
        <text>N(6)-[(R)-dihydrolipoyl]-L-lysyl-[protein] + acetyl-CoA = N(6)-[(R)-S(8)-acetyldihydrolipoyl]-L-lysyl-[protein] + CoA</text>
        <dbReference type="Rhea" id="RHEA:17017"/>
        <dbReference type="Rhea" id="RHEA-COMP:10475"/>
        <dbReference type="Rhea" id="RHEA-COMP:10478"/>
        <dbReference type="ChEBI" id="CHEBI:57287"/>
        <dbReference type="ChEBI" id="CHEBI:57288"/>
        <dbReference type="ChEBI" id="CHEBI:83100"/>
        <dbReference type="ChEBI" id="CHEBI:83111"/>
        <dbReference type="EC" id="2.3.1.12"/>
    </reaction>
</comment>
<comment type="cofactor">
    <cofactor evidence="1">
        <name>(R)-lipoate</name>
        <dbReference type="ChEBI" id="CHEBI:83088"/>
    </cofactor>
    <text evidence="1">Binds 1 lipoyl cofactor covalently.</text>
</comment>
<comment type="subunit">
    <text evidence="1">Forms a 24-polypeptide structural core with octahedral symmetry.</text>
</comment>
<comment type="similarity">
    <text evidence="6">Belongs to the 2-oxoacid dehydrogenase family.</text>
</comment>
<reference key="1">
    <citation type="journal article" date="1991" name="Biochim. Biophys. Acta">
        <title>Lipoamide dehydrogenase of Staphylococcus aureus: nucleotide sequence and sequence analysis.</title>
        <authorList>
            <person name="Hemila H."/>
        </authorList>
    </citation>
    <scope>NUCLEOTIDE SEQUENCE [GENOMIC DNA]</scope>
    <source>
        <strain>ATCC 27733 / V8</strain>
    </source>
</reference>